<protein>
    <recommendedName>
        <fullName evidence="1">Holliday junction branch migration complex subunit RuvB</fullName>
        <ecNumber evidence="1">3.6.4.-</ecNumber>
    </recommendedName>
</protein>
<dbReference type="EC" id="3.6.4.-" evidence="1"/>
<dbReference type="EMBL" id="CP000890">
    <property type="protein sequence ID" value="ABX77334.1"/>
    <property type="molecule type" value="Genomic_DNA"/>
</dbReference>
<dbReference type="RefSeq" id="WP_005772105.1">
    <property type="nucleotide sequence ID" value="NC_010117.1"/>
</dbReference>
<dbReference type="SMR" id="A9N9A3"/>
<dbReference type="KEGG" id="cbs:COXBURSA331_A1756"/>
<dbReference type="HOGENOM" id="CLU_055599_1_0_6"/>
<dbReference type="GO" id="GO:0005737">
    <property type="term" value="C:cytoplasm"/>
    <property type="evidence" value="ECO:0007669"/>
    <property type="project" value="UniProtKB-SubCell"/>
</dbReference>
<dbReference type="GO" id="GO:0048476">
    <property type="term" value="C:Holliday junction resolvase complex"/>
    <property type="evidence" value="ECO:0007669"/>
    <property type="project" value="UniProtKB-UniRule"/>
</dbReference>
<dbReference type="GO" id="GO:0005524">
    <property type="term" value="F:ATP binding"/>
    <property type="evidence" value="ECO:0007669"/>
    <property type="project" value="UniProtKB-UniRule"/>
</dbReference>
<dbReference type="GO" id="GO:0016887">
    <property type="term" value="F:ATP hydrolysis activity"/>
    <property type="evidence" value="ECO:0007669"/>
    <property type="project" value="InterPro"/>
</dbReference>
<dbReference type="GO" id="GO:0000400">
    <property type="term" value="F:four-way junction DNA binding"/>
    <property type="evidence" value="ECO:0007669"/>
    <property type="project" value="UniProtKB-UniRule"/>
</dbReference>
<dbReference type="GO" id="GO:0009378">
    <property type="term" value="F:four-way junction helicase activity"/>
    <property type="evidence" value="ECO:0007669"/>
    <property type="project" value="InterPro"/>
</dbReference>
<dbReference type="GO" id="GO:0006310">
    <property type="term" value="P:DNA recombination"/>
    <property type="evidence" value="ECO:0007669"/>
    <property type="project" value="UniProtKB-UniRule"/>
</dbReference>
<dbReference type="GO" id="GO:0006281">
    <property type="term" value="P:DNA repair"/>
    <property type="evidence" value="ECO:0007669"/>
    <property type="project" value="UniProtKB-UniRule"/>
</dbReference>
<dbReference type="CDD" id="cd00009">
    <property type="entry name" value="AAA"/>
    <property type="match status" value="1"/>
</dbReference>
<dbReference type="FunFam" id="1.10.8.60:FF:000023">
    <property type="entry name" value="Holliday junction ATP-dependent DNA helicase RuvB"/>
    <property type="match status" value="1"/>
</dbReference>
<dbReference type="FunFam" id="3.40.50.300:FF:000073">
    <property type="entry name" value="Holliday junction ATP-dependent DNA helicase RuvB"/>
    <property type="match status" value="1"/>
</dbReference>
<dbReference type="Gene3D" id="1.10.8.60">
    <property type="match status" value="1"/>
</dbReference>
<dbReference type="Gene3D" id="3.40.50.300">
    <property type="entry name" value="P-loop containing nucleotide triphosphate hydrolases"/>
    <property type="match status" value="1"/>
</dbReference>
<dbReference type="Gene3D" id="1.10.10.10">
    <property type="entry name" value="Winged helix-like DNA-binding domain superfamily/Winged helix DNA-binding domain"/>
    <property type="match status" value="1"/>
</dbReference>
<dbReference type="HAMAP" id="MF_00016">
    <property type="entry name" value="DNA_HJ_migration_RuvB"/>
    <property type="match status" value="1"/>
</dbReference>
<dbReference type="InterPro" id="IPR003593">
    <property type="entry name" value="AAA+_ATPase"/>
</dbReference>
<dbReference type="InterPro" id="IPR041445">
    <property type="entry name" value="AAA_lid_4"/>
</dbReference>
<dbReference type="InterPro" id="IPR004605">
    <property type="entry name" value="DNA_helicase_Holl-junc_RuvB"/>
</dbReference>
<dbReference type="InterPro" id="IPR027417">
    <property type="entry name" value="P-loop_NTPase"/>
</dbReference>
<dbReference type="InterPro" id="IPR008824">
    <property type="entry name" value="RuvB-like_N"/>
</dbReference>
<dbReference type="InterPro" id="IPR008823">
    <property type="entry name" value="RuvB_C"/>
</dbReference>
<dbReference type="InterPro" id="IPR036388">
    <property type="entry name" value="WH-like_DNA-bd_sf"/>
</dbReference>
<dbReference type="InterPro" id="IPR036390">
    <property type="entry name" value="WH_DNA-bd_sf"/>
</dbReference>
<dbReference type="NCBIfam" id="NF000868">
    <property type="entry name" value="PRK00080.1"/>
    <property type="match status" value="1"/>
</dbReference>
<dbReference type="NCBIfam" id="TIGR00635">
    <property type="entry name" value="ruvB"/>
    <property type="match status" value="1"/>
</dbReference>
<dbReference type="PANTHER" id="PTHR42848">
    <property type="match status" value="1"/>
</dbReference>
<dbReference type="PANTHER" id="PTHR42848:SF1">
    <property type="entry name" value="HOLLIDAY JUNCTION BRANCH MIGRATION COMPLEX SUBUNIT RUVB"/>
    <property type="match status" value="1"/>
</dbReference>
<dbReference type="Pfam" id="PF17864">
    <property type="entry name" value="AAA_lid_4"/>
    <property type="match status" value="1"/>
</dbReference>
<dbReference type="Pfam" id="PF05491">
    <property type="entry name" value="RuvB_C"/>
    <property type="match status" value="1"/>
</dbReference>
<dbReference type="Pfam" id="PF05496">
    <property type="entry name" value="RuvB_N"/>
    <property type="match status" value="1"/>
</dbReference>
<dbReference type="SMART" id="SM00382">
    <property type="entry name" value="AAA"/>
    <property type="match status" value="1"/>
</dbReference>
<dbReference type="SUPFAM" id="SSF52540">
    <property type="entry name" value="P-loop containing nucleoside triphosphate hydrolases"/>
    <property type="match status" value="1"/>
</dbReference>
<dbReference type="SUPFAM" id="SSF46785">
    <property type="entry name" value="Winged helix' DNA-binding domain"/>
    <property type="match status" value="1"/>
</dbReference>
<gene>
    <name evidence="1" type="primary">ruvB</name>
    <name type="ordered locus">COXBURSA331_A1756</name>
</gene>
<evidence type="ECO:0000255" key="1">
    <source>
        <dbReference type="HAMAP-Rule" id="MF_00016"/>
    </source>
</evidence>
<feature type="chain" id="PRO_1000074081" description="Holliday junction branch migration complex subunit RuvB">
    <location>
        <begin position="1"/>
        <end position="351"/>
    </location>
</feature>
<feature type="region of interest" description="Large ATPase domain (RuvB-L)" evidence="1">
    <location>
        <begin position="1"/>
        <end position="186"/>
    </location>
</feature>
<feature type="region of interest" description="Small ATPAse domain (RuvB-S)" evidence="1">
    <location>
        <begin position="187"/>
        <end position="257"/>
    </location>
</feature>
<feature type="region of interest" description="Head domain (RuvB-H)" evidence="1">
    <location>
        <begin position="260"/>
        <end position="351"/>
    </location>
</feature>
<feature type="binding site" evidence="1">
    <location>
        <position position="25"/>
    </location>
    <ligand>
        <name>ATP</name>
        <dbReference type="ChEBI" id="CHEBI:30616"/>
    </ligand>
</feature>
<feature type="binding site" evidence="1">
    <location>
        <position position="26"/>
    </location>
    <ligand>
        <name>ATP</name>
        <dbReference type="ChEBI" id="CHEBI:30616"/>
    </ligand>
</feature>
<feature type="binding site" evidence="1">
    <location>
        <position position="67"/>
    </location>
    <ligand>
        <name>ATP</name>
        <dbReference type="ChEBI" id="CHEBI:30616"/>
    </ligand>
</feature>
<feature type="binding site" evidence="1">
    <location>
        <position position="70"/>
    </location>
    <ligand>
        <name>ATP</name>
        <dbReference type="ChEBI" id="CHEBI:30616"/>
    </ligand>
</feature>
<feature type="binding site" evidence="1">
    <location>
        <position position="71"/>
    </location>
    <ligand>
        <name>ATP</name>
        <dbReference type="ChEBI" id="CHEBI:30616"/>
    </ligand>
</feature>
<feature type="binding site" evidence="1">
    <location>
        <position position="71"/>
    </location>
    <ligand>
        <name>Mg(2+)</name>
        <dbReference type="ChEBI" id="CHEBI:18420"/>
    </ligand>
</feature>
<feature type="binding site" evidence="1">
    <location>
        <position position="72"/>
    </location>
    <ligand>
        <name>ATP</name>
        <dbReference type="ChEBI" id="CHEBI:30616"/>
    </ligand>
</feature>
<feature type="binding site" evidence="1">
    <location>
        <begin position="133"/>
        <end position="135"/>
    </location>
    <ligand>
        <name>ATP</name>
        <dbReference type="ChEBI" id="CHEBI:30616"/>
    </ligand>
</feature>
<feature type="binding site" evidence="1">
    <location>
        <position position="176"/>
    </location>
    <ligand>
        <name>ATP</name>
        <dbReference type="ChEBI" id="CHEBI:30616"/>
    </ligand>
</feature>
<feature type="binding site" evidence="1">
    <location>
        <position position="186"/>
    </location>
    <ligand>
        <name>ATP</name>
        <dbReference type="ChEBI" id="CHEBI:30616"/>
    </ligand>
</feature>
<feature type="binding site" evidence="1">
    <location>
        <position position="223"/>
    </location>
    <ligand>
        <name>ATP</name>
        <dbReference type="ChEBI" id="CHEBI:30616"/>
    </ligand>
</feature>
<feature type="binding site" evidence="1">
    <location>
        <position position="296"/>
    </location>
    <ligand>
        <name>DNA</name>
        <dbReference type="ChEBI" id="CHEBI:16991"/>
    </ligand>
</feature>
<feature type="binding site" evidence="1">
    <location>
        <position position="315"/>
    </location>
    <ligand>
        <name>DNA</name>
        <dbReference type="ChEBI" id="CHEBI:16991"/>
    </ligand>
</feature>
<feature type="binding site" evidence="1">
    <location>
        <position position="320"/>
    </location>
    <ligand>
        <name>DNA</name>
        <dbReference type="ChEBI" id="CHEBI:16991"/>
    </ligand>
</feature>
<accession>A9N9A3</accession>
<reference key="1">
    <citation type="submission" date="2007-11" db="EMBL/GenBank/DDBJ databases">
        <title>Genome sequencing of phylogenetically and phenotypically diverse Coxiella burnetii isolates.</title>
        <authorList>
            <person name="Seshadri R."/>
            <person name="Samuel J.E."/>
        </authorList>
    </citation>
    <scope>NUCLEOTIDE SEQUENCE [LARGE SCALE GENOMIC DNA]</scope>
    <source>
        <strain>RSA 331 / Henzerling II</strain>
    </source>
</reference>
<comment type="function">
    <text evidence="1">The RuvA-RuvB-RuvC complex processes Holliday junction (HJ) DNA during genetic recombination and DNA repair, while the RuvA-RuvB complex plays an important role in the rescue of blocked DNA replication forks via replication fork reversal (RFR). RuvA specifically binds to HJ cruciform DNA, conferring on it an open structure. The RuvB hexamer acts as an ATP-dependent pump, pulling dsDNA into and through the RuvAB complex. RuvB forms 2 homohexamers on either side of HJ DNA bound by 1 or 2 RuvA tetramers; 4 subunits per hexamer contact DNA at a time. Coordinated motions by a converter formed by DNA-disengaged RuvB subunits stimulates ATP hydrolysis and nucleotide exchange. Immobilization of the converter enables RuvB to convert the ATP-contained energy into a lever motion, pulling 2 nucleotides of DNA out of the RuvA tetramer per ATP hydrolyzed, thus driving DNA branch migration. The RuvB motors rotate together with the DNA substrate, which together with the progressing nucleotide cycle form the mechanistic basis for DNA recombination by continuous HJ branch migration. Branch migration allows RuvC to scan DNA until it finds its consensus sequence, where it cleaves and resolves cruciform DNA.</text>
</comment>
<comment type="catalytic activity">
    <reaction evidence="1">
        <text>ATP + H2O = ADP + phosphate + H(+)</text>
        <dbReference type="Rhea" id="RHEA:13065"/>
        <dbReference type="ChEBI" id="CHEBI:15377"/>
        <dbReference type="ChEBI" id="CHEBI:15378"/>
        <dbReference type="ChEBI" id="CHEBI:30616"/>
        <dbReference type="ChEBI" id="CHEBI:43474"/>
        <dbReference type="ChEBI" id="CHEBI:456216"/>
    </reaction>
</comment>
<comment type="subunit">
    <text evidence="1">Homohexamer. Forms an RuvA(8)-RuvB(12)-Holliday junction (HJ) complex. HJ DNA is sandwiched between 2 RuvA tetramers; dsDNA enters through RuvA and exits via RuvB. An RuvB hexamer assembles on each DNA strand where it exits the tetramer. Each RuvB hexamer is contacted by two RuvA subunits (via domain III) on 2 adjacent RuvB subunits; this complex drives branch migration. In the full resolvosome a probable DNA-RuvA(4)-RuvB(12)-RuvC(2) complex forms which resolves the HJ.</text>
</comment>
<comment type="subcellular location">
    <subcellularLocation>
        <location evidence="1">Cytoplasm</location>
    </subcellularLocation>
</comment>
<comment type="domain">
    <text evidence="1">Has 3 domains, the large (RuvB-L) and small ATPase (RuvB-S) domains and the C-terminal head (RuvB-H) domain. The head domain binds DNA, while the ATPase domains jointly bind ATP, ADP or are empty depending on the state of the subunit in the translocation cycle. During a single DNA translocation step the structure of each domain remains the same, but their relative positions change.</text>
</comment>
<comment type="similarity">
    <text evidence="1">Belongs to the RuvB family.</text>
</comment>
<name>RUVB_COXBR</name>
<keyword id="KW-0067">ATP-binding</keyword>
<keyword id="KW-0963">Cytoplasm</keyword>
<keyword id="KW-0227">DNA damage</keyword>
<keyword id="KW-0233">DNA recombination</keyword>
<keyword id="KW-0234">DNA repair</keyword>
<keyword id="KW-0238">DNA-binding</keyword>
<keyword id="KW-0378">Hydrolase</keyword>
<keyword id="KW-0547">Nucleotide-binding</keyword>
<sequence length="351" mass="39151">MDEKIETRLIGATVQSNEPDLERSIRPKRLSDYIGQAAVREQMDIFIRAATNRREALDHVLIFGPPGLGKTTLAHIIAHEMQAGLKQTSGPVLEKAGDLAALLTNLEPHDVLFIDEIHRLNPAIEEVLYPALEDFQLDIIIGEGPSARSIKLDLPPFTLVGATTRAGLLTSPLRDRFGIVQRLEFYRIPDLIHIVKRAAHILNVVIDENGAGEIARRSRGTPRIANRLLRRVRDFAEVRANGMINESIAKEALDLLNVDIRGLDVMDRKLLETIIKKFQGGPVGIESLAAAISEERGTIEDVIEPYLIQEGFILRTPRGRIATELTYQHFKLPLPTQSTLQENFDLLGKVE</sequence>
<organism>
    <name type="scientific">Coxiella burnetii (strain RSA 331 / Henzerling II)</name>
    <dbReference type="NCBI Taxonomy" id="360115"/>
    <lineage>
        <taxon>Bacteria</taxon>
        <taxon>Pseudomonadati</taxon>
        <taxon>Pseudomonadota</taxon>
        <taxon>Gammaproteobacteria</taxon>
        <taxon>Legionellales</taxon>
        <taxon>Coxiellaceae</taxon>
        <taxon>Coxiella</taxon>
    </lineage>
</organism>
<proteinExistence type="inferred from homology"/>